<organism>
    <name type="scientific">Stutzerimonas stutzeri (strain A1501)</name>
    <name type="common">Pseudomonas stutzeri</name>
    <dbReference type="NCBI Taxonomy" id="379731"/>
    <lineage>
        <taxon>Bacteria</taxon>
        <taxon>Pseudomonadati</taxon>
        <taxon>Pseudomonadota</taxon>
        <taxon>Gammaproteobacteria</taxon>
        <taxon>Pseudomonadales</taxon>
        <taxon>Pseudomonadaceae</taxon>
        <taxon>Stutzerimonas</taxon>
    </lineage>
</organism>
<evidence type="ECO:0000255" key="1">
    <source>
        <dbReference type="HAMAP-Rule" id="MF_01123"/>
    </source>
</evidence>
<accession>A4VKA0</accession>
<proteinExistence type="inferred from homology"/>
<protein>
    <recommendedName>
        <fullName evidence="1">Acetyl-coenzyme A synthetase</fullName>
        <shortName evidence="1">AcCoA synthetase</shortName>
        <shortName evidence="1">Acs</shortName>
        <ecNumber evidence="1">6.2.1.1</ecNumber>
    </recommendedName>
    <alternativeName>
        <fullName evidence="1">Acetate--CoA ligase</fullName>
    </alternativeName>
    <alternativeName>
        <fullName evidence="1">Acyl-activating enzyme</fullName>
    </alternativeName>
</protein>
<sequence>MCAASVYPVSPEAAKHSLTDEAAYRAMYQQSVINPEGFWREQAARLDWIRPFSEVKRTSFDDHHVDIKWFADGTLNVSANCLDRHLAERGDQVAIIWEGDDPSEHREITYRELYQEVCKFANALRGQDVHRGDVVTIYMPMIPEAAVAMLACARIGAIHSVVFGGFSPEALAGRIIDGSSKVVITADQGIRGGKTIALKENVDEALTNPQTRCVQKIIVVRRTGANIRWYPHRDVSYDDLMRVAGEVCAPKEMGAEEPLFILYTSGSTGKPKGVLHTCGGYLLYAALTHERVFDYRPGDIYWCTADIGWITGHSYLIYGPLANGATTLMYEGVPNYPDVTRIARIIDKHRVNILYTAPTAIRAMMAEGPAAMEGADGSSLRLLGTVGEPINPEAWHWYYETVGRSRCPIVDTWWQTETGGILISPLPGATALKPGSATRPLFGVVPGLVDNLGNLLEGPAEGNLVILDSWPGQMRTIYGDHDRFVDTYFKTFRGMYFTGDGARRDEDGYYWITGRVDDVLNVSGHRMGTAEIESALVAHAKVAEAAAVGVPHPLKGQAIYVYVTLVAGTEPSDTLRQELQQWVRHEIGPIAVPDTIQWAPGLPKTRSGKIMRRLLRKIATDDYDTLGDTSTLADPGVVDQLIAAHEAVKQR</sequence>
<gene>
    <name evidence="1" type="primary">acsA</name>
    <name type="ordered locus">PST_1723</name>
</gene>
<reference key="1">
    <citation type="journal article" date="2008" name="Proc. Natl. Acad. Sci. U.S.A.">
        <title>Nitrogen fixation island and rhizosphere competence traits in the genome of root-associated Pseudomonas stutzeri A1501.</title>
        <authorList>
            <person name="Yan Y."/>
            <person name="Yang J."/>
            <person name="Dou Y."/>
            <person name="Chen M."/>
            <person name="Ping S."/>
            <person name="Peng J."/>
            <person name="Lu W."/>
            <person name="Zhang W."/>
            <person name="Yao Z."/>
            <person name="Li H."/>
            <person name="Liu W."/>
            <person name="He S."/>
            <person name="Geng L."/>
            <person name="Zhang X."/>
            <person name="Yang F."/>
            <person name="Yu H."/>
            <person name="Zhan Y."/>
            <person name="Li D."/>
            <person name="Lin Z."/>
            <person name="Wang Y."/>
            <person name="Elmerich C."/>
            <person name="Lin M."/>
            <person name="Jin Q."/>
        </authorList>
    </citation>
    <scope>NUCLEOTIDE SEQUENCE [LARGE SCALE GENOMIC DNA]</scope>
    <source>
        <strain>A1501</strain>
    </source>
</reference>
<feature type="chain" id="PRO_1000065305" description="Acetyl-coenzyme A synthetase">
    <location>
        <begin position="1"/>
        <end position="651"/>
    </location>
</feature>
<feature type="binding site" evidence="1">
    <location>
        <begin position="191"/>
        <end position="194"/>
    </location>
    <ligand>
        <name>CoA</name>
        <dbReference type="ChEBI" id="CHEBI:57287"/>
    </ligand>
</feature>
<feature type="binding site" evidence="1">
    <location>
        <position position="311"/>
    </location>
    <ligand>
        <name>CoA</name>
        <dbReference type="ChEBI" id="CHEBI:57287"/>
    </ligand>
</feature>
<feature type="binding site" evidence="1">
    <location>
        <position position="335"/>
    </location>
    <ligand>
        <name>CoA</name>
        <dbReference type="ChEBI" id="CHEBI:57287"/>
    </ligand>
</feature>
<feature type="binding site" evidence="1">
    <location>
        <begin position="387"/>
        <end position="389"/>
    </location>
    <ligand>
        <name>ATP</name>
        <dbReference type="ChEBI" id="CHEBI:30616"/>
    </ligand>
</feature>
<feature type="binding site" evidence="1">
    <location>
        <begin position="411"/>
        <end position="416"/>
    </location>
    <ligand>
        <name>ATP</name>
        <dbReference type="ChEBI" id="CHEBI:30616"/>
    </ligand>
</feature>
<feature type="binding site" evidence="1">
    <location>
        <position position="500"/>
    </location>
    <ligand>
        <name>ATP</name>
        <dbReference type="ChEBI" id="CHEBI:30616"/>
    </ligand>
</feature>
<feature type="binding site" evidence="1">
    <location>
        <position position="515"/>
    </location>
    <ligand>
        <name>ATP</name>
        <dbReference type="ChEBI" id="CHEBI:30616"/>
    </ligand>
</feature>
<feature type="binding site" evidence="1">
    <location>
        <position position="523"/>
    </location>
    <ligand>
        <name>CoA</name>
        <dbReference type="ChEBI" id="CHEBI:57287"/>
    </ligand>
</feature>
<feature type="binding site" evidence="1">
    <location>
        <position position="526"/>
    </location>
    <ligand>
        <name>ATP</name>
        <dbReference type="ChEBI" id="CHEBI:30616"/>
    </ligand>
</feature>
<feature type="binding site" evidence="1">
    <location>
        <position position="537"/>
    </location>
    <ligand>
        <name>Mg(2+)</name>
        <dbReference type="ChEBI" id="CHEBI:18420"/>
    </ligand>
</feature>
<feature type="binding site" evidence="1">
    <location>
        <position position="539"/>
    </location>
    <ligand>
        <name>Mg(2+)</name>
        <dbReference type="ChEBI" id="CHEBI:18420"/>
    </ligand>
</feature>
<feature type="binding site" evidence="1">
    <location>
        <position position="542"/>
    </location>
    <ligand>
        <name>Mg(2+)</name>
        <dbReference type="ChEBI" id="CHEBI:18420"/>
    </ligand>
</feature>
<feature type="binding site" evidence="1">
    <location>
        <position position="584"/>
    </location>
    <ligand>
        <name>CoA</name>
        <dbReference type="ChEBI" id="CHEBI:57287"/>
    </ligand>
</feature>
<feature type="modified residue" description="N6-acetyllysine" evidence="1">
    <location>
        <position position="609"/>
    </location>
</feature>
<keyword id="KW-0007">Acetylation</keyword>
<keyword id="KW-0067">ATP-binding</keyword>
<keyword id="KW-0436">Ligase</keyword>
<keyword id="KW-0460">Magnesium</keyword>
<keyword id="KW-0479">Metal-binding</keyword>
<keyword id="KW-0547">Nucleotide-binding</keyword>
<keyword id="KW-1185">Reference proteome</keyword>
<comment type="function">
    <text evidence="1">Catalyzes the conversion of acetate into acetyl-CoA (AcCoA), an essential intermediate at the junction of anabolic and catabolic pathways. AcsA undergoes a two-step reaction. In the first half reaction, AcsA combines acetate with ATP to form acetyl-adenylate (AcAMP) intermediate. In the second half reaction, it can then transfer the acetyl group from AcAMP to the sulfhydryl group of CoA, forming the product AcCoA.</text>
</comment>
<comment type="catalytic activity">
    <reaction evidence="1">
        <text>acetate + ATP + CoA = acetyl-CoA + AMP + diphosphate</text>
        <dbReference type="Rhea" id="RHEA:23176"/>
        <dbReference type="ChEBI" id="CHEBI:30089"/>
        <dbReference type="ChEBI" id="CHEBI:30616"/>
        <dbReference type="ChEBI" id="CHEBI:33019"/>
        <dbReference type="ChEBI" id="CHEBI:57287"/>
        <dbReference type="ChEBI" id="CHEBI:57288"/>
        <dbReference type="ChEBI" id="CHEBI:456215"/>
        <dbReference type="EC" id="6.2.1.1"/>
    </reaction>
</comment>
<comment type="cofactor">
    <cofactor evidence="1">
        <name>Mg(2+)</name>
        <dbReference type="ChEBI" id="CHEBI:18420"/>
    </cofactor>
</comment>
<comment type="PTM">
    <text evidence="1">Acetylated. Deacetylation by the SIR2-homolog deacetylase activates the enzyme.</text>
</comment>
<comment type="similarity">
    <text evidence="1">Belongs to the ATP-dependent AMP-binding enzyme family.</text>
</comment>
<name>ACSA_STUS1</name>
<dbReference type="EC" id="6.2.1.1" evidence="1"/>
<dbReference type="EMBL" id="CP000304">
    <property type="protein sequence ID" value="ABP79401.1"/>
    <property type="molecule type" value="Genomic_DNA"/>
</dbReference>
<dbReference type="RefSeq" id="WP_011912878.1">
    <property type="nucleotide sequence ID" value="NC_009434.1"/>
</dbReference>
<dbReference type="SMR" id="A4VKA0"/>
<dbReference type="KEGG" id="psa:PST_1723"/>
<dbReference type="eggNOG" id="COG0365">
    <property type="taxonomic scope" value="Bacteria"/>
</dbReference>
<dbReference type="HOGENOM" id="CLU_000022_3_6_6"/>
<dbReference type="Proteomes" id="UP000000233">
    <property type="component" value="Chromosome"/>
</dbReference>
<dbReference type="GO" id="GO:0005829">
    <property type="term" value="C:cytosol"/>
    <property type="evidence" value="ECO:0007669"/>
    <property type="project" value="TreeGrafter"/>
</dbReference>
<dbReference type="GO" id="GO:0003987">
    <property type="term" value="F:acetate-CoA ligase activity"/>
    <property type="evidence" value="ECO:0007669"/>
    <property type="project" value="UniProtKB-UniRule"/>
</dbReference>
<dbReference type="GO" id="GO:0016208">
    <property type="term" value="F:AMP binding"/>
    <property type="evidence" value="ECO:0007669"/>
    <property type="project" value="InterPro"/>
</dbReference>
<dbReference type="GO" id="GO:0005524">
    <property type="term" value="F:ATP binding"/>
    <property type="evidence" value="ECO:0007669"/>
    <property type="project" value="UniProtKB-KW"/>
</dbReference>
<dbReference type="GO" id="GO:0046872">
    <property type="term" value="F:metal ion binding"/>
    <property type="evidence" value="ECO:0007669"/>
    <property type="project" value="UniProtKB-KW"/>
</dbReference>
<dbReference type="GO" id="GO:0019427">
    <property type="term" value="P:acetyl-CoA biosynthetic process from acetate"/>
    <property type="evidence" value="ECO:0007669"/>
    <property type="project" value="InterPro"/>
</dbReference>
<dbReference type="CDD" id="cd05966">
    <property type="entry name" value="ACS"/>
    <property type="match status" value="1"/>
</dbReference>
<dbReference type="FunFam" id="3.30.300.30:FF:000004">
    <property type="entry name" value="Acetyl-coenzyme A synthetase"/>
    <property type="match status" value="1"/>
</dbReference>
<dbReference type="FunFam" id="3.40.50.12780:FF:000001">
    <property type="entry name" value="Acetyl-coenzyme A synthetase"/>
    <property type="match status" value="1"/>
</dbReference>
<dbReference type="Gene3D" id="3.30.300.30">
    <property type="match status" value="1"/>
</dbReference>
<dbReference type="Gene3D" id="3.40.50.12780">
    <property type="entry name" value="N-terminal domain of ligase-like"/>
    <property type="match status" value="1"/>
</dbReference>
<dbReference type="HAMAP" id="MF_01123">
    <property type="entry name" value="Ac_CoA_synth"/>
    <property type="match status" value="1"/>
</dbReference>
<dbReference type="InterPro" id="IPR011904">
    <property type="entry name" value="Ac_CoA_lig"/>
</dbReference>
<dbReference type="InterPro" id="IPR032387">
    <property type="entry name" value="ACAS_N"/>
</dbReference>
<dbReference type="InterPro" id="IPR025110">
    <property type="entry name" value="AMP-bd_C"/>
</dbReference>
<dbReference type="InterPro" id="IPR045851">
    <property type="entry name" value="AMP-bd_C_sf"/>
</dbReference>
<dbReference type="InterPro" id="IPR020845">
    <property type="entry name" value="AMP-binding_CS"/>
</dbReference>
<dbReference type="InterPro" id="IPR000873">
    <property type="entry name" value="AMP-dep_synth/lig_dom"/>
</dbReference>
<dbReference type="InterPro" id="IPR042099">
    <property type="entry name" value="ANL_N_sf"/>
</dbReference>
<dbReference type="NCBIfam" id="TIGR02188">
    <property type="entry name" value="Ac_CoA_lig_AcsA"/>
    <property type="match status" value="1"/>
</dbReference>
<dbReference type="NCBIfam" id="NF001208">
    <property type="entry name" value="PRK00174.1"/>
    <property type="match status" value="1"/>
</dbReference>
<dbReference type="PANTHER" id="PTHR24095">
    <property type="entry name" value="ACETYL-COENZYME A SYNTHETASE"/>
    <property type="match status" value="1"/>
</dbReference>
<dbReference type="PANTHER" id="PTHR24095:SF243">
    <property type="entry name" value="ACETYL-COENZYME A SYNTHETASE"/>
    <property type="match status" value="1"/>
</dbReference>
<dbReference type="Pfam" id="PF16177">
    <property type="entry name" value="ACAS_N"/>
    <property type="match status" value="1"/>
</dbReference>
<dbReference type="Pfam" id="PF00501">
    <property type="entry name" value="AMP-binding"/>
    <property type="match status" value="1"/>
</dbReference>
<dbReference type="Pfam" id="PF13193">
    <property type="entry name" value="AMP-binding_C"/>
    <property type="match status" value="1"/>
</dbReference>
<dbReference type="SUPFAM" id="SSF56801">
    <property type="entry name" value="Acetyl-CoA synthetase-like"/>
    <property type="match status" value="1"/>
</dbReference>
<dbReference type="PROSITE" id="PS00455">
    <property type="entry name" value="AMP_BINDING"/>
    <property type="match status" value="1"/>
</dbReference>